<reference key="1">
    <citation type="journal article" date="1991" name="Virology">
        <title>Nucleotide sequence of RNA 3 of peanut stunt cucumovirus.</title>
        <authorList>
            <person name="Karasawa A."/>
            <person name="Nakaho K."/>
            <person name="Kakutani T."/>
            <person name="Minobe Y."/>
            <person name="Ehara Y."/>
        </authorList>
    </citation>
    <scope>NUCLEOTIDE SEQUENCE [GENOMIC RNA]</scope>
</reference>
<comment type="function">
    <text evidence="1">Transports viral genome to neighboring plant cells directly through plasmosdesmata, without any budding. The movement protein allows efficient cell to cell propagation, by bypassing the host cell wall barrier. Acts by forming a tubular structure at the host plasmodesmata, enlarging it enough to allow free passage of virion capsids (By similarity).</text>
</comment>
<comment type="subcellular location">
    <subcellularLocation>
        <location evidence="1">Host cell junction</location>
        <location evidence="1">Host plasmodesma</location>
    </subcellularLocation>
    <text evidence="1">Assembles into long tubular structures at the surface of the infected protoplast.</text>
</comment>
<comment type="similarity">
    <text evidence="2">Belongs to the cucumovirus movement protein family.</text>
</comment>
<organismHost>
    <name type="scientific">Apium graveolens</name>
    <name type="common">Celery</name>
    <dbReference type="NCBI Taxonomy" id="4045"/>
</organismHost>
<organismHost>
    <name type="scientific">Arachis hypogaea</name>
    <name type="common">Peanut</name>
    <dbReference type="NCBI Taxonomy" id="3818"/>
</organismHost>
<organismHost>
    <name type="scientific">Coronilla</name>
    <dbReference type="NCBI Taxonomy" id="53860"/>
</organismHost>
<organismHost>
    <name type="scientific">Glycine max</name>
    <name type="common">Soybean</name>
    <name type="synonym">Glycine hispida</name>
    <dbReference type="NCBI Taxonomy" id="3847"/>
</organismHost>
<organismHost>
    <name type="scientific">Lupinus luteus</name>
    <name type="common">European yellow lupine</name>
    <dbReference type="NCBI Taxonomy" id="3873"/>
</organismHost>
<organismHost>
    <name type="scientific">Medicago sativa</name>
    <name type="common">Alfalfa</name>
    <dbReference type="NCBI Taxonomy" id="3879"/>
</organismHost>
<organismHost>
    <name type="scientific">Nicotiana tabacum</name>
    <name type="common">Common tobacco</name>
    <dbReference type="NCBI Taxonomy" id="4097"/>
</organismHost>
<organismHost>
    <name type="scientific">Phaseolus angularis</name>
    <name type="common">Azuki bean</name>
    <name type="synonym">Vigna angularis</name>
    <dbReference type="NCBI Taxonomy" id="3914"/>
</organismHost>
<organismHost>
    <name type="scientific">Tephrosia</name>
    <dbReference type="NCBI Taxonomy" id="47097"/>
</organismHost>
<organismHost>
    <name type="scientific">Trifolium</name>
    <dbReference type="NCBI Taxonomy" id="3898"/>
</organismHost>
<organismHost>
    <name type="scientific">Vicia</name>
    <dbReference type="NCBI Taxonomy" id="3904"/>
</organismHost>
<gene>
    <name type="ORF">ORF3a</name>
</gene>
<accession>P22117</accession>
<organism>
    <name type="scientific">Peanut stunt virus (strain J)</name>
    <name type="common">PSV</name>
    <dbReference type="NCBI Taxonomy" id="12314"/>
    <lineage>
        <taxon>Viruses</taxon>
        <taxon>Riboviria</taxon>
        <taxon>Orthornavirae</taxon>
        <taxon>Kitrinoviricota</taxon>
        <taxon>Alsuviricetes</taxon>
        <taxon>Martellivirales</taxon>
        <taxon>Bromoviridae</taxon>
        <taxon>Cucumovirus</taxon>
        <taxon>Peanut stunt virus</taxon>
    </lineage>
</organism>
<keyword id="KW-1031">Host cell junction</keyword>
<keyword id="KW-0813">Transport</keyword>
<keyword id="KW-0916">Viral movement protein</keyword>
<name>MVP_PSVJ</name>
<dbReference type="EMBL" id="D00668">
    <property type="protein sequence ID" value="BAA00571.1"/>
    <property type="molecule type" value="Genomic_RNA"/>
</dbReference>
<dbReference type="PIR" id="A40786">
    <property type="entry name" value="P3VXPS"/>
</dbReference>
<dbReference type="GO" id="GO:0044219">
    <property type="term" value="C:host cell plasmodesma"/>
    <property type="evidence" value="ECO:0007669"/>
    <property type="project" value="UniProtKB-SubCell"/>
</dbReference>
<dbReference type="GO" id="GO:0046740">
    <property type="term" value="P:transport of virus in host, cell to cell"/>
    <property type="evidence" value="ECO:0007669"/>
    <property type="project" value="UniProtKB-KW"/>
</dbReference>
<dbReference type="InterPro" id="IPR000603">
    <property type="entry name" value="MPV"/>
</dbReference>
<dbReference type="Pfam" id="PF00803">
    <property type="entry name" value="3A"/>
    <property type="match status" value="1"/>
</dbReference>
<evidence type="ECO:0000250" key="1"/>
<evidence type="ECO:0000305" key="2"/>
<feature type="chain" id="PRO_0000083251" description="Movement protein">
    <location>
        <begin position="1"/>
        <end position="288"/>
    </location>
</feature>
<protein>
    <recommendedName>
        <fullName>Movement protein</fullName>
        <shortName>MP</shortName>
    </recommendedName>
    <alternativeName>
        <fullName>Protein 3A</fullName>
    </alternativeName>
</protein>
<proteinExistence type="inferred from homology"/>
<sequence length="288" mass="31418">MAFSGSSRTLTQQSSAASTDDLHKILFSPEAIKEMATKCDLGRHHWLRADDAVCVRPLVPETTSNKVAQWFKTGYEAGKLPSKGYMIIPQVLCAVTRTVTSNAEGSLEIYLADLGDVELAPIDDQVVTLHNRDLPALISFQPTYDCPMEKVGDRSRCFAVVIKRHGYLGHPGSTASVCSNWQPKFSSKNNNYKPAAAGKTLVLPYNRLSELSGPSAVVRLLKSQLNMQSSPLFQLPGGPIMQKAIGSEREEGLNCKRKLPLEEVCTTSRDSVSSRPSVVNGIERPGTL</sequence>